<keyword id="KW-0417">Keratinization</keyword>
<keyword id="KW-1267">Proteomics identification</keyword>
<keyword id="KW-1185">Reference proteome</keyword>
<proteinExistence type="evidence at protein level"/>
<dbReference type="EMBL" id="AL353779">
    <property type="status" value="NOT_ANNOTATED_CDS"/>
    <property type="molecule type" value="Genomic_DNA"/>
</dbReference>
<dbReference type="CCDS" id="CCDS1025.1"/>
<dbReference type="RefSeq" id="NP_848129.1">
    <property type="nucleotide sequence ID" value="NM_178352.3"/>
</dbReference>
<dbReference type="BioGRID" id="131641">
    <property type="interactions" value="75"/>
</dbReference>
<dbReference type="FunCoup" id="Q5T752">
    <property type="interactions" value="21"/>
</dbReference>
<dbReference type="IntAct" id="Q5T752">
    <property type="interactions" value="54"/>
</dbReference>
<dbReference type="STRING" id="9606.ENSP00000316737"/>
<dbReference type="BioMuta" id="LCE1D"/>
<dbReference type="DMDM" id="74745322"/>
<dbReference type="MassIVE" id="Q5T752"/>
<dbReference type="PaxDb" id="9606-ENSP00000316737"/>
<dbReference type="PeptideAtlas" id="Q5T752"/>
<dbReference type="ProteomicsDB" id="64639"/>
<dbReference type="Antibodypedia" id="82222">
    <property type="antibodies" value="1 antibodies from 1 providers"/>
</dbReference>
<dbReference type="DNASU" id="353134"/>
<dbReference type="Ensembl" id="ENST00000326233.7">
    <property type="protein sequence ID" value="ENSP00000316737.6"/>
    <property type="gene ID" value="ENSG00000172155.10"/>
</dbReference>
<dbReference type="GeneID" id="353134"/>
<dbReference type="KEGG" id="hsa:353134"/>
<dbReference type="MANE-Select" id="ENST00000326233.7">
    <property type="protein sequence ID" value="ENSP00000316737.6"/>
    <property type="RefSeq nucleotide sequence ID" value="NM_178352.3"/>
    <property type="RefSeq protein sequence ID" value="NP_848129.1"/>
</dbReference>
<dbReference type="UCSC" id="uc009wnp.3">
    <property type="organism name" value="human"/>
</dbReference>
<dbReference type="AGR" id="HGNC:29465"/>
<dbReference type="CTD" id="353134"/>
<dbReference type="DisGeNET" id="353134"/>
<dbReference type="GeneCards" id="LCE1D"/>
<dbReference type="HGNC" id="HGNC:29465">
    <property type="gene designation" value="LCE1D"/>
</dbReference>
<dbReference type="HPA" id="ENSG00000172155">
    <property type="expression patterns" value="Tissue enriched (skin)"/>
</dbReference>
<dbReference type="MIM" id="612606">
    <property type="type" value="gene"/>
</dbReference>
<dbReference type="neXtProt" id="NX_Q5T752"/>
<dbReference type="OpenTargets" id="ENSG00000172155"/>
<dbReference type="PharmGKB" id="PA134906518"/>
<dbReference type="VEuPathDB" id="HostDB:ENSG00000172155"/>
<dbReference type="GeneTree" id="ENSGT00950000183301"/>
<dbReference type="HOGENOM" id="CLU_152038_0_0_1"/>
<dbReference type="InParanoid" id="Q5T752"/>
<dbReference type="OMA" id="PPKSCCG"/>
<dbReference type="PAN-GO" id="Q5T752">
    <property type="GO annotations" value="0 GO annotations based on evolutionary models"/>
</dbReference>
<dbReference type="PathwayCommons" id="Q5T752"/>
<dbReference type="Reactome" id="R-HSA-6809371">
    <property type="pathway name" value="Formation of the cornified envelope"/>
</dbReference>
<dbReference type="SignaLink" id="Q5T752"/>
<dbReference type="BioGRID-ORCS" id="353134">
    <property type="hits" value="13 hits in 684 CRISPR screens"/>
</dbReference>
<dbReference type="GenomeRNAi" id="353134"/>
<dbReference type="Pharos" id="Q5T752">
    <property type="development level" value="Tbio"/>
</dbReference>
<dbReference type="PRO" id="PR:Q5T752"/>
<dbReference type="Proteomes" id="UP000005640">
    <property type="component" value="Chromosome 1"/>
</dbReference>
<dbReference type="RNAct" id="Q5T752">
    <property type="molecule type" value="protein"/>
</dbReference>
<dbReference type="Bgee" id="ENSG00000172155">
    <property type="expression patterns" value="Expressed in skin of leg and 43 other cell types or tissues"/>
</dbReference>
<dbReference type="GO" id="GO:0001533">
    <property type="term" value="C:cornified envelope"/>
    <property type="evidence" value="ECO:0000314"/>
    <property type="project" value="MGI"/>
</dbReference>
<dbReference type="GO" id="GO:0005737">
    <property type="term" value="C:cytoplasm"/>
    <property type="evidence" value="ECO:0000314"/>
    <property type="project" value="MGI"/>
</dbReference>
<dbReference type="GO" id="GO:0048471">
    <property type="term" value="C:perinuclear region of cytoplasm"/>
    <property type="evidence" value="ECO:0000314"/>
    <property type="project" value="MGI"/>
</dbReference>
<dbReference type="GO" id="GO:0042802">
    <property type="term" value="F:identical protein binding"/>
    <property type="evidence" value="ECO:0000353"/>
    <property type="project" value="IntAct"/>
</dbReference>
<dbReference type="GO" id="GO:0071277">
    <property type="term" value="P:cellular response to calcium ion"/>
    <property type="evidence" value="ECO:0000314"/>
    <property type="project" value="MGI"/>
</dbReference>
<dbReference type="GO" id="GO:0050890">
    <property type="term" value="P:cognition"/>
    <property type="evidence" value="ECO:0000315"/>
    <property type="project" value="UniProtKB"/>
</dbReference>
<dbReference type="GO" id="GO:0031424">
    <property type="term" value="P:keratinization"/>
    <property type="evidence" value="ECO:0007669"/>
    <property type="project" value="UniProtKB-KW"/>
</dbReference>
<dbReference type="InterPro" id="IPR028205">
    <property type="entry name" value="LCE"/>
</dbReference>
<dbReference type="Pfam" id="PF14672">
    <property type="entry name" value="LCE"/>
    <property type="match status" value="2"/>
</dbReference>
<dbReference type="PRINTS" id="PR00021">
    <property type="entry name" value="PRORICH"/>
</dbReference>
<accession>Q5T752</accession>
<evidence type="ECO:0000256" key="1">
    <source>
        <dbReference type="SAM" id="MobiDB-lite"/>
    </source>
</evidence>
<evidence type="ECO:0000269" key="2">
    <source>
    </source>
</evidence>
<evidence type="ECO:0000269" key="3">
    <source>
    </source>
</evidence>
<evidence type="ECO:0000305" key="4"/>
<organism>
    <name type="scientific">Homo sapiens</name>
    <name type="common">Human</name>
    <dbReference type="NCBI Taxonomy" id="9606"/>
    <lineage>
        <taxon>Eukaryota</taxon>
        <taxon>Metazoa</taxon>
        <taxon>Chordata</taxon>
        <taxon>Craniata</taxon>
        <taxon>Vertebrata</taxon>
        <taxon>Euteleostomi</taxon>
        <taxon>Mammalia</taxon>
        <taxon>Eutheria</taxon>
        <taxon>Euarchontoglires</taxon>
        <taxon>Primates</taxon>
        <taxon>Haplorrhini</taxon>
        <taxon>Catarrhini</taxon>
        <taxon>Hominidae</taxon>
        <taxon>Homo</taxon>
    </lineage>
</organism>
<feature type="chain" id="PRO_0000235327" description="Late cornified envelope protein 1D">
    <location>
        <begin position="1"/>
        <end position="114"/>
    </location>
</feature>
<feature type="region of interest" description="Disordered" evidence="1">
    <location>
        <begin position="1"/>
        <end position="21"/>
    </location>
</feature>
<feature type="region of interest" description="Disordered" evidence="1">
    <location>
        <begin position="75"/>
        <end position="114"/>
    </location>
</feature>
<feature type="compositionally biased region" description="Low complexity" evidence="1">
    <location>
        <begin position="1"/>
        <end position="10"/>
    </location>
</feature>
<feature type="compositionally biased region" description="Basic residues" evidence="1">
    <location>
        <begin position="75"/>
        <end position="86"/>
    </location>
</feature>
<feature type="compositionally biased region" description="Low complexity" evidence="1">
    <location>
        <begin position="88"/>
        <end position="99"/>
    </location>
</feature>
<feature type="sequence variant" id="VAR_060065" description="In dbSNP:rs7527180.">
    <original>N</original>
    <variation>S</variation>
    <location>
        <position position="59"/>
    </location>
</feature>
<feature type="sequence variant" id="VAR_062116" description="In dbSNP:rs41268490.">
    <original>R</original>
    <variation>H</variation>
    <location>
        <position position="78"/>
    </location>
</feature>
<name>LCE1D_HUMAN</name>
<protein>
    <recommendedName>
        <fullName>Late cornified envelope protein 1D</fullName>
    </recommendedName>
    <alternativeName>
        <fullName>Late envelope protein 4</fullName>
    </alternativeName>
</protein>
<sequence>MSCQQSQQQCQPPPKCTPKCTPKCPAPKCPPKCPPVSSCCSVSSGGCCGSSSGGGCGSNSGGCCSSGGGGCCLSHHRRHRSHRRRPQSSDCCSQPSGGSSCCGGGSSQHSGGCC</sequence>
<reference key="1">
    <citation type="journal article" date="2006" name="Nature">
        <title>The DNA sequence and biological annotation of human chromosome 1.</title>
        <authorList>
            <person name="Gregory S.G."/>
            <person name="Barlow K.F."/>
            <person name="McLay K.E."/>
            <person name="Kaul R."/>
            <person name="Swarbreck D."/>
            <person name="Dunham A."/>
            <person name="Scott C.E."/>
            <person name="Howe K.L."/>
            <person name="Woodfine K."/>
            <person name="Spencer C.C.A."/>
            <person name="Jones M.C."/>
            <person name="Gillson C."/>
            <person name="Searle S."/>
            <person name="Zhou Y."/>
            <person name="Kokocinski F."/>
            <person name="McDonald L."/>
            <person name="Evans R."/>
            <person name="Phillips K."/>
            <person name="Atkinson A."/>
            <person name="Cooper R."/>
            <person name="Jones C."/>
            <person name="Hall R.E."/>
            <person name="Andrews T.D."/>
            <person name="Lloyd C."/>
            <person name="Ainscough R."/>
            <person name="Almeida J.P."/>
            <person name="Ambrose K.D."/>
            <person name="Anderson F."/>
            <person name="Andrew R.W."/>
            <person name="Ashwell R.I.S."/>
            <person name="Aubin K."/>
            <person name="Babbage A.K."/>
            <person name="Bagguley C.L."/>
            <person name="Bailey J."/>
            <person name="Beasley H."/>
            <person name="Bethel G."/>
            <person name="Bird C.P."/>
            <person name="Bray-Allen S."/>
            <person name="Brown J.Y."/>
            <person name="Brown A.J."/>
            <person name="Buckley D."/>
            <person name="Burton J."/>
            <person name="Bye J."/>
            <person name="Carder C."/>
            <person name="Chapman J.C."/>
            <person name="Clark S.Y."/>
            <person name="Clarke G."/>
            <person name="Clee C."/>
            <person name="Cobley V."/>
            <person name="Collier R.E."/>
            <person name="Corby N."/>
            <person name="Coville G.J."/>
            <person name="Davies J."/>
            <person name="Deadman R."/>
            <person name="Dunn M."/>
            <person name="Earthrowl M."/>
            <person name="Ellington A.G."/>
            <person name="Errington H."/>
            <person name="Frankish A."/>
            <person name="Frankland J."/>
            <person name="French L."/>
            <person name="Garner P."/>
            <person name="Garnett J."/>
            <person name="Gay L."/>
            <person name="Ghori M.R.J."/>
            <person name="Gibson R."/>
            <person name="Gilby L.M."/>
            <person name="Gillett W."/>
            <person name="Glithero R.J."/>
            <person name="Grafham D.V."/>
            <person name="Griffiths C."/>
            <person name="Griffiths-Jones S."/>
            <person name="Grocock R."/>
            <person name="Hammond S."/>
            <person name="Harrison E.S.I."/>
            <person name="Hart E."/>
            <person name="Haugen E."/>
            <person name="Heath P.D."/>
            <person name="Holmes S."/>
            <person name="Holt K."/>
            <person name="Howden P.J."/>
            <person name="Hunt A.R."/>
            <person name="Hunt S.E."/>
            <person name="Hunter G."/>
            <person name="Isherwood J."/>
            <person name="James R."/>
            <person name="Johnson C."/>
            <person name="Johnson D."/>
            <person name="Joy A."/>
            <person name="Kay M."/>
            <person name="Kershaw J.K."/>
            <person name="Kibukawa M."/>
            <person name="Kimberley A.M."/>
            <person name="King A."/>
            <person name="Knights A.J."/>
            <person name="Lad H."/>
            <person name="Laird G."/>
            <person name="Lawlor S."/>
            <person name="Leongamornlert D.A."/>
            <person name="Lloyd D.M."/>
            <person name="Loveland J."/>
            <person name="Lovell J."/>
            <person name="Lush M.J."/>
            <person name="Lyne R."/>
            <person name="Martin S."/>
            <person name="Mashreghi-Mohammadi M."/>
            <person name="Matthews L."/>
            <person name="Matthews N.S.W."/>
            <person name="McLaren S."/>
            <person name="Milne S."/>
            <person name="Mistry S."/>
            <person name="Moore M.J.F."/>
            <person name="Nickerson T."/>
            <person name="O'Dell C.N."/>
            <person name="Oliver K."/>
            <person name="Palmeiri A."/>
            <person name="Palmer S.A."/>
            <person name="Parker A."/>
            <person name="Patel D."/>
            <person name="Pearce A.V."/>
            <person name="Peck A.I."/>
            <person name="Pelan S."/>
            <person name="Phelps K."/>
            <person name="Phillimore B.J."/>
            <person name="Plumb R."/>
            <person name="Rajan J."/>
            <person name="Raymond C."/>
            <person name="Rouse G."/>
            <person name="Saenphimmachak C."/>
            <person name="Sehra H.K."/>
            <person name="Sheridan E."/>
            <person name="Shownkeen R."/>
            <person name="Sims S."/>
            <person name="Skuce C.D."/>
            <person name="Smith M."/>
            <person name="Steward C."/>
            <person name="Subramanian S."/>
            <person name="Sycamore N."/>
            <person name="Tracey A."/>
            <person name="Tromans A."/>
            <person name="Van Helmond Z."/>
            <person name="Wall M."/>
            <person name="Wallis J.M."/>
            <person name="White S."/>
            <person name="Whitehead S.L."/>
            <person name="Wilkinson J.E."/>
            <person name="Willey D.L."/>
            <person name="Williams H."/>
            <person name="Wilming L."/>
            <person name="Wray P.W."/>
            <person name="Wu Z."/>
            <person name="Coulson A."/>
            <person name="Vaudin M."/>
            <person name="Sulston J.E."/>
            <person name="Durbin R.M."/>
            <person name="Hubbard T."/>
            <person name="Wooster R."/>
            <person name="Dunham I."/>
            <person name="Carter N.P."/>
            <person name="McVean G."/>
            <person name="Ross M.T."/>
            <person name="Harrow J."/>
            <person name="Olson M.V."/>
            <person name="Beck S."/>
            <person name="Rogers J."/>
            <person name="Bentley D.R."/>
        </authorList>
    </citation>
    <scope>NUCLEOTIDE SEQUENCE [LARGE SCALE GENOMIC DNA]</scope>
</reference>
<reference key="2">
    <citation type="journal article" date="2005" name="J. Invest. Dermatol.">
        <title>Late cornified envelope family in differentiating epithelia -- response to calcium and ultraviolet irradiation.</title>
        <authorList>
            <person name="Jackson B."/>
            <person name="Tilli C.L."/>
            <person name="Hardman M."/>
            <person name="Avilion A."/>
            <person name="Macleod M."/>
            <person name="Ashcroft G."/>
            <person name="Byrne C."/>
        </authorList>
    </citation>
    <scope>NOMENCLATURE</scope>
    <scope>TISSUE SPECIFICITY</scope>
    <scope>INDUCTION BY UVB</scope>
</reference>
<reference key="3">
    <citation type="journal article" date="2023" name="J. Invest. Dermatol.">
        <title>CYSRT1: An Antimicrobial Epidermal Protein that Can Interact with Late Cornified Envelope Proteins.</title>
        <authorList>
            <person name="Niehues H."/>
            <person name="Rikken G."/>
            <person name="Kersten F.F.J."/>
            <person name="Eeftens J.M."/>
            <person name="van Vlijmen-Willems I.M.J.J."/>
            <person name="Rodijk-Olthuis D."/>
            <person name="Jansen P.A.M."/>
            <person name="Hendriks W.J.A.J."/>
            <person name="Ederveen T.H.A."/>
            <person name="Schalkwijk J."/>
            <person name="van den Bogaard E.H."/>
            <person name="Zeeuwen P.L.J.M."/>
        </authorList>
    </citation>
    <scope>INTERACTION WITH CYSRT1</scope>
</reference>
<comment type="function">
    <text>Precursors of the cornified envelope of the stratum corneum.</text>
</comment>
<comment type="subunit">
    <text evidence="3">Interacts with CYSRT1.</text>
</comment>
<comment type="interaction">
    <interactant intactId="EBI-11741311">
        <id>Q5T752</id>
    </interactant>
    <interactant intactId="EBI-1211484">
        <id>P05187</id>
        <label>ALPP</label>
    </interactant>
    <organismsDiffer>false</organismsDiffer>
    <experiments>3</experiments>
</comment>
<comment type="interaction">
    <interactant intactId="EBI-11741311">
        <id>Q5T752</id>
    </interactant>
    <interactant intactId="EBI-17286414">
        <id>A2BDD9</id>
        <label>AMOT</label>
    </interactant>
    <organismsDiffer>false</organismsDiffer>
    <experiments>3</experiments>
</comment>
<comment type="interaction">
    <interactant intactId="EBI-11741311">
        <id>Q5T752</id>
    </interactant>
    <interactant intactId="EBI-744545">
        <id>Q8NEC5</id>
        <label>CATSPER1</label>
    </interactant>
    <organismsDiffer>false</organismsDiffer>
    <experiments>3</experiments>
</comment>
<comment type="interaction">
    <interactant intactId="EBI-11741311">
        <id>Q5T752</id>
    </interactant>
    <interactant intactId="EBI-3867333">
        <id>A8MQ03</id>
        <label>CYSRT1</label>
    </interactant>
    <organismsDiffer>false</organismsDiffer>
    <experiments>5</experiments>
</comment>
<comment type="interaction">
    <interactant intactId="EBI-11741311">
        <id>Q5T752</id>
    </interactant>
    <interactant intactId="EBI-747754">
        <id>P28799</id>
        <label>GRN</label>
    </interactant>
    <organismsDiffer>false</organismsDiffer>
    <experiments>3</experiments>
</comment>
<comment type="interaction">
    <interactant intactId="EBI-11741311">
        <id>Q5T752</id>
    </interactant>
    <interactant intactId="EBI-740785">
        <id>P49639</id>
        <label>HOXA1</label>
    </interactant>
    <organismsDiffer>false</organismsDiffer>
    <experiments>5</experiments>
</comment>
<comment type="interaction">
    <interactant intactId="EBI-11741311">
        <id>Q5T752</id>
    </interactant>
    <interactant intactId="EBI-11749135">
        <id>Q8IUG1</id>
        <label>KRTAP1-3</label>
    </interactant>
    <organismsDiffer>false</organismsDiffer>
    <experiments>3</experiments>
</comment>
<comment type="interaction">
    <interactant intactId="EBI-11741311">
        <id>Q5T752</id>
    </interactant>
    <interactant intactId="EBI-11741292">
        <id>Q9BYS1</id>
        <label>KRTAP1-5</label>
    </interactant>
    <organismsDiffer>false</organismsDiffer>
    <experiments>5</experiments>
</comment>
<comment type="interaction">
    <interactant intactId="EBI-11741311">
        <id>Q5T752</id>
    </interactant>
    <interactant intactId="EBI-10217483">
        <id>P60412</id>
        <label>KRTAP10-11</label>
    </interactant>
    <organismsDiffer>false</organismsDiffer>
    <experiments>3</experiments>
</comment>
<comment type="interaction">
    <interactant intactId="EBI-11741311">
        <id>Q5T752</id>
    </interactant>
    <interactant intactId="EBI-10172150">
        <id>P60370</id>
        <label>KRTAP10-5</label>
    </interactant>
    <organismsDiffer>false</organismsDiffer>
    <experiments>3</experiments>
</comment>
<comment type="interaction">
    <interactant intactId="EBI-11741311">
        <id>Q5T752</id>
    </interactant>
    <interactant intactId="EBI-10172290">
        <id>P60409</id>
        <label>KRTAP10-7</label>
    </interactant>
    <organismsDiffer>false</organismsDiffer>
    <experiments>3</experiments>
</comment>
<comment type="interaction">
    <interactant intactId="EBI-11741311">
        <id>Q5T752</id>
    </interactant>
    <interactant intactId="EBI-10171774">
        <id>P60410</id>
        <label>KRTAP10-8</label>
    </interactant>
    <organismsDiffer>false</organismsDiffer>
    <experiments>3</experiments>
</comment>
<comment type="interaction">
    <interactant intactId="EBI-11741311">
        <id>Q5T752</id>
    </interactant>
    <interactant intactId="EBI-10172052">
        <id>P60411</id>
        <label>KRTAP10-9</label>
    </interactant>
    <organismsDiffer>false</organismsDiffer>
    <experiments>5</experiments>
</comment>
<comment type="interaction">
    <interactant intactId="EBI-11741311">
        <id>Q5T752</id>
    </interactant>
    <interactant intactId="EBI-14065470">
        <id>Q9BYR9</id>
        <label>KRTAP2-4</label>
    </interactant>
    <organismsDiffer>false</organismsDiffer>
    <experiments>3</experiments>
</comment>
<comment type="interaction">
    <interactant intactId="EBI-11741311">
        <id>Q5T752</id>
    </interactant>
    <interactant intactId="EBI-34579671">
        <id>Q9BYQ7</id>
        <label>KRTAP4-1</label>
    </interactant>
    <organismsDiffer>false</organismsDiffer>
    <experiments>3</experiments>
</comment>
<comment type="interaction">
    <interactant intactId="EBI-11741311">
        <id>Q5T752</id>
    </interactant>
    <interactant intactId="EBI-10302392">
        <id>Q9BYQ6</id>
        <label>KRTAP4-11</label>
    </interactant>
    <organismsDiffer>false</organismsDiffer>
    <experiments>5</experiments>
</comment>
<comment type="interaction">
    <interactant intactId="EBI-11741311">
        <id>Q5T752</id>
    </interactant>
    <interactant intactId="EBI-739863">
        <id>Q9BQ66</id>
        <label>KRTAP4-12</label>
    </interactant>
    <organismsDiffer>false</organismsDiffer>
    <experiments>3</experiments>
</comment>
<comment type="interaction">
    <interactant intactId="EBI-11741311">
        <id>Q5T752</id>
    </interactant>
    <interactant intactId="EBI-10172511">
        <id>Q9BYR5</id>
        <label>KRTAP4-2</label>
    </interactant>
    <organismsDiffer>false</organismsDiffer>
    <experiments>6</experiments>
</comment>
<comment type="interaction">
    <interactant intactId="EBI-11741311">
        <id>Q5T752</id>
    </interactant>
    <interactant intactId="EBI-11958132">
        <id>Q9BYR3</id>
        <label>KRTAP4-4</label>
    </interactant>
    <organismsDiffer>false</organismsDiffer>
    <experiments>3</experiments>
</comment>
<comment type="interaction">
    <interactant intactId="EBI-11741311">
        <id>Q5T752</id>
    </interactant>
    <interactant intactId="EBI-11993254">
        <id>Q9BYR2</id>
        <label>KRTAP4-5</label>
    </interactant>
    <organismsDiffer>false</organismsDiffer>
    <experiments>3</experiments>
</comment>
<comment type="interaction">
    <interactant intactId="EBI-11741311">
        <id>Q5T752</id>
    </interactant>
    <interactant intactId="EBI-11993296">
        <id>Q6L8G4</id>
        <label>KRTAP5-11</label>
    </interactant>
    <organismsDiffer>false</organismsDiffer>
    <experiments>7</experiments>
</comment>
<comment type="interaction">
    <interactant intactId="EBI-11741311">
        <id>Q5T752</id>
    </interactant>
    <interactant intactId="EBI-11958178">
        <id>Q701N4</id>
        <label>KRTAP5-2</label>
    </interactant>
    <organismsDiffer>false</organismsDiffer>
    <experiments>3</experiments>
</comment>
<comment type="interaction">
    <interactant intactId="EBI-11741311">
        <id>Q5T752</id>
    </interactant>
    <interactant intactId="EBI-11974251">
        <id>Q6L8H2</id>
        <label>KRTAP5-3</label>
    </interactant>
    <organismsDiffer>false</organismsDiffer>
    <experiments>3</experiments>
</comment>
<comment type="interaction">
    <interactant intactId="EBI-11741311">
        <id>Q5T752</id>
    </interactant>
    <interactant intactId="EBI-11963072">
        <id>Q6L8H1</id>
        <label>KRTAP5-4</label>
    </interactant>
    <organismsDiffer>false</organismsDiffer>
    <experiments>3</experiments>
</comment>
<comment type="interaction">
    <interactant intactId="EBI-11741311">
        <id>Q5T752</id>
    </interactant>
    <interactant intactId="EBI-10250562">
        <id>Q6L8G9</id>
        <label>KRTAP5-6</label>
    </interactant>
    <organismsDiffer>false</organismsDiffer>
    <experiments>6</experiments>
</comment>
<comment type="interaction">
    <interactant intactId="EBI-11741311">
        <id>Q5T752</id>
    </interactant>
    <interactant intactId="EBI-3958099">
        <id>P26371</id>
        <label>KRTAP5-9</label>
    </interactant>
    <organismsDiffer>false</organismsDiffer>
    <experiments>3</experiments>
</comment>
<comment type="interaction">
    <interactant intactId="EBI-11741311">
        <id>Q5T752</id>
    </interactant>
    <interactant intactId="EBI-1044640">
        <id>Q9BYQ4</id>
        <label>KRTAP9-2</label>
    </interactant>
    <organismsDiffer>false</organismsDiffer>
    <experiments>3</experiments>
</comment>
<comment type="interaction">
    <interactant intactId="EBI-11741311">
        <id>Q5T752</id>
    </interactant>
    <interactant intactId="EBI-1043191">
        <id>Q9BYQ3</id>
        <label>KRTAP9-3</label>
    </interactant>
    <organismsDiffer>false</organismsDiffer>
    <experiments>4</experiments>
</comment>
<comment type="interaction">
    <interactant intactId="EBI-11741311">
        <id>Q5T752</id>
    </interactant>
    <interactant intactId="EBI-11958364">
        <id>Q9BYQ0</id>
        <label>KRTAP9-8</label>
    </interactant>
    <organismsDiffer>false</organismsDiffer>
    <experiments>3</experiments>
</comment>
<comment type="interaction">
    <interactant intactId="EBI-11741311">
        <id>Q5T752</id>
    </interactant>
    <interactant intactId="EBI-10245913">
        <id>Q5T7P3</id>
        <label>LCE1B</label>
    </interactant>
    <organismsDiffer>false</organismsDiffer>
    <experiments>3</experiments>
</comment>
<comment type="interaction">
    <interactant intactId="EBI-11741311">
        <id>Q5T752</id>
    </interactant>
    <interactant intactId="EBI-12224199">
        <id>Q5T751</id>
        <label>LCE1C</label>
    </interactant>
    <organismsDiffer>false</organismsDiffer>
    <experiments>3</experiments>
</comment>
<comment type="interaction">
    <interactant intactId="EBI-11741311">
        <id>Q5T752</id>
    </interactant>
    <interactant intactId="EBI-11741311">
        <id>Q5T752</id>
        <label>LCE1D</label>
    </interactant>
    <organismsDiffer>false</organismsDiffer>
    <experiments>3</experiments>
</comment>
<comment type="interaction">
    <interactant intactId="EBI-11741311">
        <id>Q5T752</id>
    </interactant>
    <interactant intactId="EBI-11955335">
        <id>Q5T753</id>
        <label>LCE1E</label>
    </interactant>
    <organismsDiffer>false</organismsDiffer>
    <experiments>3</experiments>
</comment>
<comment type="interaction">
    <interactant intactId="EBI-11741311">
        <id>Q5T752</id>
    </interactant>
    <interactant intactId="EBI-11958008">
        <id>Q5T754</id>
        <label>LCE1F</label>
    </interactant>
    <organismsDiffer>false</organismsDiffer>
    <experiments>3</experiments>
</comment>
<comment type="interaction">
    <interactant intactId="EBI-11741311">
        <id>Q5T752</id>
    </interactant>
    <interactant intactId="EBI-10246607">
        <id>Q5TA79</id>
        <label>LCE2A</label>
    </interactant>
    <organismsDiffer>false</organismsDiffer>
    <experiments>6</experiments>
</comment>
<comment type="interaction">
    <interactant intactId="EBI-11741311">
        <id>Q5T752</id>
    </interactant>
    <interactant intactId="EBI-11478468">
        <id>O14633</id>
        <label>LCE2B</label>
    </interactant>
    <organismsDiffer>false</organismsDiffer>
    <experiments>3</experiments>
</comment>
<comment type="interaction">
    <interactant intactId="EBI-11741311">
        <id>Q5T752</id>
    </interactant>
    <interactant intactId="EBI-11973993">
        <id>Q5TA81</id>
        <label>LCE2C</label>
    </interactant>
    <organismsDiffer>false</organismsDiffer>
    <experiments>3</experiments>
</comment>
<comment type="interaction">
    <interactant intactId="EBI-11741311">
        <id>Q5T752</id>
    </interactant>
    <interactant intactId="EBI-10246750">
        <id>Q5TA82</id>
        <label>LCE2D</label>
    </interactant>
    <organismsDiffer>false</organismsDiffer>
    <experiments>3</experiments>
</comment>
<comment type="interaction">
    <interactant intactId="EBI-11741311">
        <id>Q5T752</id>
    </interactant>
    <interactant intactId="EBI-11974495">
        <id>Q5TA77</id>
        <label>LCE3B</label>
    </interactant>
    <organismsDiffer>false</organismsDiffer>
    <experiments>3</experiments>
</comment>
<comment type="interaction">
    <interactant intactId="EBI-11741311">
        <id>Q5T752</id>
    </interactant>
    <interactant intactId="EBI-2683507">
        <id>Q8N5G2</id>
        <label>MACO1</label>
    </interactant>
    <organismsDiffer>false</organismsDiffer>
    <experiments>3</experiments>
</comment>
<comment type="interaction">
    <interactant intactId="EBI-11741311">
        <id>Q5T752</id>
    </interactant>
    <interactant intactId="EBI-724076">
        <id>Q99750</id>
        <label>MDFI</label>
    </interactant>
    <organismsDiffer>false</organismsDiffer>
    <experiments>3</experiments>
</comment>
<comment type="interaction">
    <interactant intactId="EBI-11741311">
        <id>Q5T752</id>
    </interactant>
    <interactant intactId="EBI-16439278">
        <id>Q6FHY5</id>
        <label>MEOX2</label>
    </interactant>
    <organismsDiffer>false</organismsDiffer>
    <experiments>3</experiments>
</comment>
<comment type="interaction">
    <interactant intactId="EBI-11741311">
        <id>Q5T752</id>
    </interactant>
    <interactant intactId="EBI-22310682">
        <id>P0DPK4</id>
        <label>NOTCH2NLC</label>
    </interactant>
    <organismsDiffer>false</organismsDiffer>
    <experiments>3</experiments>
</comment>
<comment type="interaction">
    <interactant intactId="EBI-11741311">
        <id>Q5T752</id>
    </interactant>
    <interactant intactId="EBI-741158">
        <id>Q96HA8</id>
        <label>NTAQ1</label>
    </interactant>
    <organismsDiffer>false</organismsDiffer>
    <experiments>3</experiments>
</comment>
<comment type="interaction">
    <interactant intactId="EBI-11741311">
        <id>Q5T752</id>
    </interactant>
    <interactant intactId="EBI-11956269">
        <id>Q92824-2</id>
        <label>PCSK5</label>
    </interactant>
    <organismsDiffer>false</organismsDiffer>
    <experiments>6</experiments>
</comment>
<comment type="interaction">
    <interactant intactId="EBI-11741311">
        <id>Q5T752</id>
    </interactant>
    <interactant intactId="EBI-473160">
        <id>Q8N2W9</id>
        <label>PIAS4</label>
    </interactant>
    <organismsDiffer>false</organismsDiffer>
    <experiments>3</experiments>
</comment>
<comment type="interaction">
    <interactant intactId="EBI-11741311">
        <id>Q5T752</id>
    </interactant>
    <interactant intactId="EBI-948156">
        <id>Q9Y4B4</id>
        <label>RAD54L2</label>
    </interactant>
    <organismsDiffer>false</organismsDiffer>
    <experiments>3</experiments>
</comment>
<comment type="interaction">
    <interactant intactId="EBI-11741311">
        <id>Q5T752</id>
    </interactant>
    <interactant intactId="EBI-3918154">
        <id>Q9UGC6</id>
        <label>RGS17</label>
    </interactant>
    <organismsDiffer>false</organismsDiffer>
    <experiments>5</experiments>
</comment>
<comment type="interaction">
    <interactant intactId="EBI-11741311">
        <id>Q5T752</id>
    </interactant>
    <interactant intactId="EBI-2340927">
        <id>P78317</id>
        <label>RNF4</label>
    </interactant>
    <organismsDiffer>false</organismsDiffer>
    <experiments>3</experiments>
</comment>
<comment type="interaction">
    <interactant intactId="EBI-11741311">
        <id>Q5T752</id>
    </interactant>
    <interactant intactId="EBI-12056025">
        <id>Q14162</id>
        <label>SCARF1</label>
    </interactant>
    <organismsDiffer>false</organismsDiffer>
    <experiments>3</experiments>
</comment>
<comment type="interaction">
    <interactant intactId="EBI-11741311">
        <id>Q5T752</id>
    </interactant>
    <interactant intactId="EBI-750494">
        <id>P49901</id>
        <label>SMCP</label>
    </interactant>
    <organismsDiffer>false</organismsDiffer>
    <experiments>3</experiments>
</comment>
<comment type="interaction">
    <interactant intactId="EBI-11741311">
        <id>Q5T752</id>
    </interactant>
    <interactant intactId="EBI-3866665">
        <id>O43609</id>
        <label>SPRY1</label>
    </interactant>
    <organismsDiffer>false</organismsDiffer>
    <experiments>3</experiments>
</comment>
<comment type="interaction">
    <interactant intactId="EBI-11741311">
        <id>Q5T752</id>
    </interactant>
    <interactant intactId="EBI-779636">
        <id>P01137</id>
        <label>TGFB1</label>
    </interactant>
    <organismsDiffer>false</organismsDiffer>
    <experiments>3</experiments>
</comment>
<comment type="interaction">
    <interactant intactId="EBI-11741311">
        <id>Q5T752</id>
    </interactant>
    <interactant intactId="EBI-5235829">
        <id>Q8IWZ5</id>
        <label>TRIM42</label>
    </interactant>
    <organismsDiffer>false</organismsDiffer>
    <experiments>3</experiments>
</comment>
<comment type="interaction">
    <interactant intactId="EBI-11741311">
        <id>Q5T752</id>
    </interactant>
    <interactant intactId="EBI-10180829">
        <id>Q7KZS0</id>
        <label>UBE2I</label>
    </interactant>
    <organismsDiffer>false</organismsDiffer>
    <experiments>3</experiments>
</comment>
<comment type="tissue specificity">
    <text evidence="2">Skin-specific. Expression was readily detected in adult trunk skin, adult arm skin, fetal skin, penal skin, vulva, esophagus and tongue. Not expressed in the cervix, rectum, lung, colon, or placenta.</text>
</comment>
<comment type="induction">
    <text evidence="2">By UVB.</text>
</comment>
<comment type="miscellaneous">
    <text>Belongs to the LCE cluster present on 1q21.</text>
</comment>
<comment type="similarity">
    <text evidence="4">Belongs to the LCE family.</text>
</comment>
<gene>
    <name type="primary">LCE1D</name>
    <name type="synonym">LEP4</name>
</gene>